<dbReference type="EC" id="4.1.3.27"/>
<dbReference type="EC" id="4.1.1.48"/>
<dbReference type="EC" id="5.3.1.24"/>
<dbReference type="EMBL" id="X07071">
    <property type="protein sequence ID" value="CAA30107.1"/>
    <property type="molecule type" value="Genomic_DNA"/>
</dbReference>
<dbReference type="EMBL" id="M14403">
    <property type="protein sequence ID" value="AAA32710.1"/>
    <property type="molecule type" value="Genomic_DNA"/>
</dbReference>
<dbReference type="EMBL" id="M14404">
    <property type="protein sequence ID" value="AAA32709.1"/>
    <property type="molecule type" value="Genomic_DNA"/>
</dbReference>
<dbReference type="PIR" id="S00643">
    <property type="entry name" value="S00643"/>
</dbReference>
<dbReference type="SMR" id="P05328"/>
<dbReference type="MEROPS" id="C26.959"/>
<dbReference type="PaxDb" id="5061-CADANGAP00006800"/>
<dbReference type="VEuPathDB" id="FungiDB:An08g06080"/>
<dbReference type="VEuPathDB" id="FungiDB:ASPNIDRAFT2_1129421"/>
<dbReference type="VEuPathDB" id="FungiDB:ATCC64974_101700"/>
<dbReference type="VEuPathDB" id="FungiDB:M747DRAFT_261847"/>
<dbReference type="eggNOG" id="KOG0026">
    <property type="taxonomic scope" value="Eukaryota"/>
</dbReference>
<dbReference type="eggNOG" id="KOG4201">
    <property type="taxonomic scope" value="Eukaryota"/>
</dbReference>
<dbReference type="eggNOG" id="KOG4202">
    <property type="taxonomic scope" value="Eukaryota"/>
</dbReference>
<dbReference type="UniPathway" id="UPA00035">
    <property type="reaction ID" value="UER00040"/>
</dbReference>
<dbReference type="UniPathway" id="UPA00035">
    <property type="reaction ID" value="UER00042"/>
</dbReference>
<dbReference type="UniPathway" id="UPA00035">
    <property type="reaction ID" value="UER00043"/>
</dbReference>
<dbReference type="GO" id="GO:0005829">
    <property type="term" value="C:cytosol"/>
    <property type="evidence" value="ECO:0007669"/>
    <property type="project" value="TreeGrafter"/>
</dbReference>
<dbReference type="GO" id="GO:0004049">
    <property type="term" value="F:anthranilate synthase activity"/>
    <property type="evidence" value="ECO:0007669"/>
    <property type="project" value="UniProtKB-EC"/>
</dbReference>
<dbReference type="GO" id="GO:0004425">
    <property type="term" value="F:indole-3-glycerol-phosphate synthase activity"/>
    <property type="evidence" value="ECO:0007669"/>
    <property type="project" value="UniProtKB-EC"/>
</dbReference>
<dbReference type="GO" id="GO:0004640">
    <property type="term" value="F:phosphoribosylanthranilate isomerase activity"/>
    <property type="evidence" value="ECO:0007669"/>
    <property type="project" value="UniProtKB-EC"/>
</dbReference>
<dbReference type="GO" id="GO:0000162">
    <property type="term" value="P:L-tryptophan biosynthetic process"/>
    <property type="evidence" value="ECO:0007669"/>
    <property type="project" value="UniProtKB-UniPathway"/>
</dbReference>
<dbReference type="CDD" id="cd01743">
    <property type="entry name" value="GATase1_Anthranilate_Synthase"/>
    <property type="match status" value="1"/>
</dbReference>
<dbReference type="CDD" id="cd00331">
    <property type="entry name" value="IGPS"/>
    <property type="match status" value="1"/>
</dbReference>
<dbReference type="CDD" id="cd00405">
    <property type="entry name" value="PRAI"/>
    <property type="match status" value="1"/>
</dbReference>
<dbReference type="FunFam" id="3.20.20.70:FF:000136">
    <property type="entry name" value="Multifunctional tryptophan biosynthesis protein"/>
    <property type="match status" value="1"/>
</dbReference>
<dbReference type="FunFam" id="3.40.50.880:FF:000031">
    <property type="entry name" value="Multifunctional tryptophan biosynthesis protein"/>
    <property type="match status" value="1"/>
</dbReference>
<dbReference type="Gene3D" id="3.40.50.880">
    <property type="match status" value="1"/>
</dbReference>
<dbReference type="Gene3D" id="3.20.20.70">
    <property type="entry name" value="Aldolase class I"/>
    <property type="match status" value="2"/>
</dbReference>
<dbReference type="HAMAP" id="MF_00135">
    <property type="entry name" value="PRAI"/>
    <property type="match status" value="1"/>
</dbReference>
<dbReference type="InterPro" id="IPR013785">
    <property type="entry name" value="Aldolase_TIM"/>
</dbReference>
<dbReference type="InterPro" id="IPR050472">
    <property type="entry name" value="Anth_synth/Amidotransfase"/>
</dbReference>
<dbReference type="InterPro" id="IPR016302">
    <property type="entry name" value="Anthranilate_synth_II"/>
</dbReference>
<dbReference type="InterPro" id="IPR029062">
    <property type="entry name" value="Class_I_gatase-like"/>
</dbReference>
<dbReference type="InterPro" id="IPR017926">
    <property type="entry name" value="GATASE"/>
</dbReference>
<dbReference type="InterPro" id="IPR013798">
    <property type="entry name" value="Indole-3-glycerol_P_synth_dom"/>
</dbReference>
<dbReference type="InterPro" id="IPR001468">
    <property type="entry name" value="Indole-3-GlycerolPSynthase_CS"/>
</dbReference>
<dbReference type="InterPro" id="IPR001240">
    <property type="entry name" value="PRAI_dom"/>
</dbReference>
<dbReference type="InterPro" id="IPR011060">
    <property type="entry name" value="RibuloseP-bd_barrel"/>
</dbReference>
<dbReference type="InterPro" id="IPR006221">
    <property type="entry name" value="TrpG/PapA_dom"/>
</dbReference>
<dbReference type="NCBIfam" id="NF001377">
    <property type="entry name" value="PRK00278.2-4"/>
    <property type="match status" value="1"/>
</dbReference>
<dbReference type="NCBIfam" id="TIGR00566">
    <property type="entry name" value="trpG_papA"/>
    <property type="match status" value="1"/>
</dbReference>
<dbReference type="PANTHER" id="PTHR43418:SF4">
    <property type="entry name" value="MULTIFUNCTIONAL TRYPTOPHAN BIOSYNTHESIS PROTEIN"/>
    <property type="match status" value="1"/>
</dbReference>
<dbReference type="PANTHER" id="PTHR43418">
    <property type="entry name" value="MULTIFUNCTIONAL TRYPTOPHAN BIOSYNTHESIS PROTEIN-RELATED"/>
    <property type="match status" value="1"/>
</dbReference>
<dbReference type="Pfam" id="PF00117">
    <property type="entry name" value="GATase"/>
    <property type="match status" value="1"/>
</dbReference>
<dbReference type="Pfam" id="PF00218">
    <property type="entry name" value="IGPS"/>
    <property type="match status" value="1"/>
</dbReference>
<dbReference type="Pfam" id="PF00697">
    <property type="entry name" value="PRAI"/>
    <property type="match status" value="1"/>
</dbReference>
<dbReference type="PIRSF" id="PIRSF001382">
    <property type="entry name" value="TrpG-trpC-trpF"/>
    <property type="match status" value="1"/>
</dbReference>
<dbReference type="PRINTS" id="PR00097">
    <property type="entry name" value="ANTSNTHASEII"/>
</dbReference>
<dbReference type="PRINTS" id="PR00099">
    <property type="entry name" value="CPSGATASE"/>
</dbReference>
<dbReference type="PRINTS" id="PR00096">
    <property type="entry name" value="GATASE"/>
</dbReference>
<dbReference type="SUPFAM" id="SSF52317">
    <property type="entry name" value="Class I glutamine amidotransferase-like"/>
    <property type="match status" value="1"/>
</dbReference>
<dbReference type="SUPFAM" id="SSF51366">
    <property type="entry name" value="Ribulose-phoshate binding barrel"/>
    <property type="match status" value="2"/>
</dbReference>
<dbReference type="PROSITE" id="PS51273">
    <property type="entry name" value="GATASE_TYPE_1"/>
    <property type="match status" value="1"/>
</dbReference>
<dbReference type="PROSITE" id="PS00614">
    <property type="entry name" value="IGPS"/>
    <property type="match status" value="1"/>
</dbReference>
<sequence>MADSGLVDHSPHHPTKAAQLSTASNVILIDNYDSFTWNVYQYLVLEGATVNVFRNDQITLEELIAKKPTQLVISPGPGHPETDAGISSAAIQYFSGKIPIFGVCMGQQCIITCFGGKVDVTGEILHGKTSPLKHDGKGAYEGLPGSLAVTRYHSLAGTHATIPDCLEVSSSVQLADDSNKDVIMGVRHKKLAVEGVQFHPESILTEYGRIMFRNFLKLTAGTWEGNGKHFGEQSSTTKATVPSNPPPKTDKKLSILERIYDHRRAAVAVQKTIPSQRPADLQAAYDLNLAPPQIPFPARLRQSPYPLSLMAEIKRASPSKGMIAENACAPAQARQYAKAGASVISVLTEPEWFKGSIDDLRAVRQSLEGMTNRPAILRKEFVFDEYQILEARLAGADTVLLIVKMLSVELLTRLYHYSRSLGMEPLVEVNTPEEMKIAVDLGAEVIGVNNRDLTSFEVDLGTTSRLMDQVPSSTIVCALSGISGPKDVEAYKKEGVKAILVGEALMRAADTATFIAELLGGSSQTVSSESRRSPLVKICGTRSEEAARAAIEAGADLIGIIMVQGRTGCVPDDVALPISQVVRSTPKPASQALHTSQEPPAATSVEYFDHSAKILRHPSRALLVGVFQNQPLDYILSQQQKLGLDVVQLHGSEPLEWAKLIPVPVIRKFGLDEPAIARRAYHSLPLLDSGVGGTGELLDQSRVQNVLDKDCGLRVILAGGLDPTNVAGIVQKLGESGRKVVGVDVSSGVESDGAQDLNKIRAFVQAVRGL</sequence>
<proteinExistence type="inferred from homology"/>
<evidence type="ECO:0000250" key="1"/>
<evidence type="ECO:0000250" key="2">
    <source>
        <dbReference type="UniProtKB" id="P00900"/>
    </source>
</evidence>
<evidence type="ECO:0000256" key="3">
    <source>
        <dbReference type="SAM" id="MobiDB-lite"/>
    </source>
</evidence>
<reference key="1">
    <citation type="journal article" date="1988" name="Curr. Genet.">
        <title>Nucleotide sequence of the Aspergillus niger trpC gene: structural relationship with analogous genes of other organisms.</title>
        <authorList>
            <person name="Kos T."/>
            <person name="Kuijvenhoven A."/>
            <person name="Hessing H.G.M."/>
            <person name="Pouwels P.H."/>
            <person name="van den Hondel C.A.M.J.J."/>
        </authorList>
    </citation>
    <scope>NUCLEOTIDE SEQUENCE [GENOMIC DNA]</scope>
    <source>
        <strain>401</strain>
    </source>
</reference>
<reference key="2">
    <citation type="journal article" date="1985" name="Gene">
        <title>Isolation and characterization of the Aspergillus niger trpC gene.</title>
        <authorList>
            <person name="Kos A."/>
            <person name="Kuijvenhoven J."/>
            <person name="Wernars K."/>
            <person name="Bos C.J."/>
            <person name="van den Broek H.W.J."/>
            <person name="Pouwels P.H."/>
            <person name="van den Hondel C.A.M.J.J."/>
        </authorList>
    </citation>
    <scope>NUCLEOTIDE SEQUENCE [GENOMIC DNA] OF 1-69 AND 392-433</scope>
</reference>
<name>TRPG_ASPNG</name>
<comment type="function">
    <text>Trifunctional enzyme bearing the Gln amidotransferase (GATase) domain of anthranilate synthase, indole-glycerolphosphate synthase, and phosphoribosylanthranilate isomerase activities.</text>
</comment>
<comment type="catalytic activity">
    <reaction>
        <text>N-(5-phospho-beta-D-ribosyl)anthranilate = 1-(2-carboxyphenylamino)-1-deoxy-D-ribulose 5-phosphate</text>
        <dbReference type="Rhea" id="RHEA:21540"/>
        <dbReference type="ChEBI" id="CHEBI:18277"/>
        <dbReference type="ChEBI" id="CHEBI:58613"/>
        <dbReference type="EC" id="5.3.1.24"/>
    </reaction>
</comment>
<comment type="catalytic activity">
    <reaction>
        <text>1-(2-carboxyphenylamino)-1-deoxy-D-ribulose 5-phosphate + H(+) = (1S,2R)-1-C-(indol-3-yl)glycerol 3-phosphate + CO2 + H2O</text>
        <dbReference type="Rhea" id="RHEA:23476"/>
        <dbReference type="ChEBI" id="CHEBI:15377"/>
        <dbReference type="ChEBI" id="CHEBI:15378"/>
        <dbReference type="ChEBI" id="CHEBI:16526"/>
        <dbReference type="ChEBI" id="CHEBI:58613"/>
        <dbReference type="ChEBI" id="CHEBI:58866"/>
        <dbReference type="EC" id="4.1.1.48"/>
    </reaction>
</comment>
<comment type="catalytic activity">
    <reaction>
        <text>chorismate + L-glutamine = anthranilate + pyruvate + L-glutamate + H(+)</text>
        <dbReference type="Rhea" id="RHEA:21732"/>
        <dbReference type="ChEBI" id="CHEBI:15361"/>
        <dbReference type="ChEBI" id="CHEBI:15378"/>
        <dbReference type="ChEBI" id="CHEBI:16567"/>
        <dbReference type="ChEBI" id="CHEBI:29748"/>
        <dbReference type="ChEBI" id="CHEBI:29985"/>
        <dbReference type="ChEBI" id="CHEBI:58359"/>
        <dbReference type="EC" id="4.1.3.27"/>
    </reaction>
</comment>
<comment type="pathway">
    <text>Amino-acid biosynthesis; L-tryptophan biosynthesis; L-tryptophan from chorismate: step 1/5.</text>
</comment>
<comment type="pathway">
    <text>Amino-acid biosynthesis; L-tryptophan biosynthesis; L-tryptophan from chorismate: step 3/5.</text>
</comment>
<comment type="pathway">
    <text>Amino-acid biosynthesis; L-tryptophan biosynthesis; L-tryptophan from chorismate: step 4/5.</text>
</comment>
<gene>
    <name type="primary">trpC</name>
</gene>
<accession>P05328</accession>
<feature type="chain" id="PRO_0000056855" description="Multifunctional tryptophan biosynthesis protein">
    <location>
        <begin position="1"/>
        <end position="770"/>
    </location>
</feature>
<feature type="domain" description="Glutamine amidotransferase type-1">
    <location>
        <begin position="25"/>
        <end position="225"/>
    </location>
</feature>
<feature type="region of interest" description="Disordered" evidence="3">
    <location>
        <begin position="228"/>
        <end position="251"/>
    </location>
</feature>
<feature type="region of interest" description="Indole-3-glycerol phosphate synthase">
    <location>
        <begin position="255"/>
        <end position="519"/>
    </location>
</feature>
<feature type="region of interest" description="N-(5'-phosphoribosyl)anthranilate isomerase">
    <location>
        <begin position="535"/>
        <end position="770"/>
    </location>
</feature>
<feature type="compositionally biased region" description="Polar residues" evidence="3">
    <location>
        <begin position="232"/>
        <end position="242"/>
    </location>
</feature>
<feature type="active site" description="Nucleophile; for GATase activity" evidence="2">
    <location>
        <position position="104"/>
    </location>
</feature>
<feature type="active site" description="For GATase activity" evidence="1">
    <location>
        <position position="199"/>
    </location>
</feature>
<feature type="active site" description="For GATase activity" evidence="1">
    <location>
        <position position="201"/>
    </location>
</feature>
<feature type="binding site" evidence="2">
    <location>
        <begin position="76"/>
        <end position="78"/>
    </location>
    <ligand>
        <name>L-glutamine</name>
        <dbReference type="ChEBI" id="CHEBI:58359"/>
    </ligand>
</feature>
<feature type="binding site" evidence="2">
    <location>
        <position position="108"/>
    </location>
    <ligand>
        <name>L-glutamine</name>
        <dbReference type="ChEBI" id="CHEBI:58359"/>
    </ligand>
</feature>
<feature type="binding site" evidence="2">
    <location>
        <begin position="154"/>
        <end position="155"/>
    </location>
    <ligand>
        <name>L-glutamine</name>
        <dbReference type="ChEBI" id="CHEBI:58359"/>
    </ligand>
</feature>
<protein>
    <recommendedName>
        <fullName>Multifunctional tryptophan biosynthesis protein</fullName>
    </recommendedName>
    <domain>
        <recommendedName>
            <fullName>Anthranilate synthase component 2</fullName>
            <shortName>AS</shortName>
            <ecNumber>4.1.3.27</ecNumber>
        </recommendedName>
        <alternativeName>
            <fullName>Anthranilate synthase, glutamine amidotransferase component</fullName>
        </alternativeName>
    </domain>
    <domain>
        <recommendedName>
            <fullName>Indole-3-glycerol phosphate synthase</fullName>
            <shortName>IGPS</shortName>
            <ecNumber>4.1.1.48</ecNumber>
        </recommendedName>
    </domain>
    <domain>
        <recommendedName>
            <fullName>N-(5'-phosphoribosyl)anthranilate isomerase</fullName>
            <shortName>PRAI</shortName>
            <ecNumber>5.3.1.24</ecNumber>
        </recommendedName>
    </domain>
</protein>
<keyword id="KW-0028">Amino-acid biosynthesis</keyword>
<keyword id="KW-0057">Aromatic amino acid biosynthesis</keyword>
<keyword id="KW-0210">Decarboxylase</keyword>
<keyword id="KW-0315">Glutamine amidotransferase</keyword>
<keyword id="KW-0413">Isomerase</keyword>
<keyword id="KW-0456">Lyase</keyword>
<keyword id="KW-0511">Multifunctional enzyme</keyword>
<keyword id="KW-0822">Tryptophan biosynthesis</keyword>
<organism>
    <name type="scientific">Aspergillus niger</name>
    <dbReference type="NCBI Taxonomy" id="5061"/>
    <lineage>
        <taxon>Eukaryota</taxon>
        <taxon>Fungi</taxon>
        <taxon>Dikarya</taxon>
        <taxon>Ascomycota</taxon>
        <taxon>Pezizomycotina</taxon>
        <taxon>Eurotiomycetes</taxon>
        <taxon>Eurotiomycetidae</taxon>
        <taxon>Eurotiales</taxon>
        <taxon>Aspergillaceae</taxon>
        <taxon>Aspergillus</taxon>
        <taxon>Aspergillus subgen. Circumdati</taxon>
    </lineage>
</organism>